<name>RL3_SULTO</name>
<comment type="function">
    <text evidence="1">One of the primary rRNA binding proteins, it binds directly near the 3'-end of the 23S rRNA, where it nucleates assembly of the 50S subunit.</text>
</comment>
<comment type="subunit">
    <text evidence="1">Part of the 50S ribosomal subunit. Forms a cluster with proteins L14 and L24e.</text>
</comment>
<comment type="similarity">
    <text evidence="1">Belongs to the universal ribosomal protein uL3 family.</text>
</comment>
<reference key="1">
    <citation type="journal article" date="2001" name="DNA Res.">
        <title>Complete genome sequence of an aerobic thermoacidophilic Crenarchaeon, Sulfolobus tokodaii strain7.</title>
        <authorList>
            <person name="Kawarabayasi Y."/>
            <person name="Hino Y."/>
            <person name="Horikawa H."/>
            <person name="Jin-no K."/>
            <person name="Takahashi M."/>
            <person name="Sekine M."/>
            <person name="Baba S."/>
            <person name="Ankai A."/>
            <person name="Kosugi H."/>
            <person name="Hosoyama A."/>
            <person name="Fukui S."/>
            <person name="Nagai Y."/>
            <person name="Nishijima K."/>
            <person name="Otsuka R."/>
            <person name="Nakazawa H."/>
            <person name="Takamiya M."/>
            <person name="Kato Y."/>
            <person name="Yoshizawa T."/>
            <person name="Tanaka T."/>
            <person name="Kudoh Y."/>
            <person name="Yamazaki J."/>
            <person name="Kushida N."/>
            <person name="Oguchi A."/>
            <person name="Aoki K."/>
            <person name="Masuda S."/>
            <person name="Yanagii M."/>
            <person name="Nishimura M."/>
            <person name="Yamagishi A."/>
            <person name="Oshima T."/>
            <person name="Kikuchi H."/>
        </authorList>
    </citation>
    <scope>NUCLEOTIDE SEQUENCE [LARGE SCALE GENOMIC DNA]</scope>
    <source>
        <strain>DSM 16993 / JCM 10545 / NBRC 100140 / 7</strain>
    </source>
</reference>
<sequence>MGHRKLASPRRGSAGVRPRKRASEILPTPRSWPTIQSNEPKLLGFVGYKVGMSHIFMIDDKPTSPNYGKEIYVPVSVIETPPVIPLAIRAYVMGPKGEPTTLTEYWGDISEDLLKLIQQRKVTRLKIDKEKMKGKLDEINNKLNDILYLRVLIATQPKLVPSLGKKKPEIVEVQVGGGDIKSQLNYVLNILGKPLSVKDVFKEGQLIDIIGVTKGKGFQGVVKRYGVVELPRWHKHRKGSRKVGARGPSFSTPSYVPQPGQMGYHRRTEYNKRILKISDDPNEINPKGGFVNYGIVRNTYLIIEGSIIGAKKRPLFLRYPIRPSWIPQSAPKITYVNLYSQQG</sequence>
<evidence type="ECO:0000255" key="1">
    <source>
        <dbReference type="HAMAP-Rule" id="MF_01325"/>
    </source>
</evidence>
<evidence type="ECO:0000256" key="2">
    <source>
        <dbReference type="SAM" id="MobiDB-lite"/>
    </source>
</evidence>
<evidence type="ECO:0000305" key="3"/>
<gene>
    <name evidence="1" type="primary">rpl3</name>
    <name type="ordered locus">STK_04290</name>
</gene>
<feature type="chain" id="PRO_0000077223" description="Large ribosomal subunit protein uL3">
    <location>
        <begin position="1"/>
        <end position="343"/>
    </location>
</feature>
<feature type="region of interest" description="Disordered" evidence="2">
    <location>
        <begin position="1"/>
        <end position="31"/>
    </location>
</feature>
<feature type="region of interest" description="Disordered" evidence="2">
    <location>
        <begin position="238"/>
        <end position="262"/>
    </location>
</feature>
<dbReference type="EMBL" id="BA000023">
    <property type="protein sequence ID" value="BAB65419.1"/>
    <property type="molecule type" value="Genomic_DNA"/>
</dbReference>
<dbReference type="RefSeq" id="WP_010978402.1">
    <property type="nucleotide sequence ID" value="NC_003106.2"/>
</dbReference>
<dbReference type="SMR" id="Q975I1"/>
<dbReference type="STRING" id="273063.STK_04290"/>
<dbReference type="KEGG" id="sto:STK_04290"/>
<dbReference type="PATRIC" id="fig|273063.9.peg.500"/>
<dbReference type="eggNOG" id="arCOG04070">
    <property type="taxonomic scope" value="Archaea"/>
</dbReference>
<dbReference type="OrthoDB" id="6121at2157"/>
<dbReference type="Proteomes" id="UP000001015">
    <property type="component" value="Chromosome"/>
</dbReference>
<dbReference type="GO" id="GO:0022625">
    <property type="term" value="C:cytosolic large ribosomal subunit"/>
    <property type="evidence" value="ECO:0007669"/>
    <property type="project" value="TreeGrafter"/>
</dbReference>
<dbReference type="GO" id="GO:0019843">
    <property type="term" value="F:rRNA binding"/>
    <property type="evidence" value="ECO:0007669"/>
    <property type="project" value="UniProtKB-UniRule"/>
</dbReference>
<dbReference type="GO" id="GO:0003735">
    <property type="term" value="F:structural constituent of ribosome"/>
    <property type="evidence" value="ECO:0007669"/>
    <property type="project" value="InterPro"/>
</dbReference>
<dbReference type="GO" id="GO:0006412">
    <property type="term" value="P:translation"/>
    <property type="evidence" value="ECO:0007669"/>
    <property type="project" value="UniProtKB-UniRule"/>
</dbReference>
<dbReference type="Gene3D" id="3.30.1430.10">
    <property type="match status" value="1"/>
</dbReference>
<dbReference type="Gene3D" id="4.10.960.10">
    <property type="entry name" value="Ribosomal protein L3, domain 3"/>
    <property type="match status" value="1"/>
</dbReference>
<dbReference type="Gene3D" id="2.40.30.10">
    <property type="entry name" value="Translation factors"/>
    <property type="match status" value="1"/>
</dbReference>
<dbReference type="HAMAP" id="MF_01325_A">
    <property type="entry name" value="Ribosomal_uL3_A"/>
    <property type="match status" value="1"/>
</dbReference>
<dbReference type="InterPro" id="IPR045077">
    <property type="entry name" value="L3_arc_euk"/>
</dbReference>
<dbReference type="InterPro" id="IPR044892">
    <property type="entry name" value="Ribosomal_L3_dom_3_arc_sf"/>
</dbReference>
<dbReference type="InterPro" id="IPR000597">
    <property type="entry name" value="Ribosomal_uL3"/>
</dbReference>
<dbReference type="InterPro" id="IPR019928">
    <property type="entry name" value="Ribosomal_uL3_arc"/>
</dbReference>
<dbReference type="InterPro" id="IPR019926">
    <property type="entry name" value="Ribosomal_uL3_CS"/>
</dbReference>
<dbReference type="InterPro" id="IPR009000">
    <property type="entry name" value="Transl_B-barrel_sf"/>
</dbReference>
<dbReference type="NCBIfam" id="TIGR03626">
    <property type="entry name" value="L3_arch"/>
    <property type="match status" value="1"/>
</dbReference>
<dbReference type="NCBIfam" id="NF003261">
    <property type="entry name" value="PRK04231.1"/>
    <property type="match status" value="1"/>
</dbReference>
<dbReference type="PANTHER" id="PTHR11363">
    <property type="entry name" value="60S RIBOSOMAL PROTEIN L3-RELATED"/>
    <property type="match status" value="1"/>
</dbReference>
<dbReference type="PANTHER" id="PTHR11363:SF5">
    <property type="entry name" value="LARGE RIBOSOMAL SUBUNIT PROTEIN UL3"/>
    <property type="match status" value="1"/>
</dbReference>
<dbReference type="Pfam" id="PF00297">
    <property type="entry name" value="Ribosomal_L3"/>
    <property type="match status" value="1"/>
</dbReference>
<dbReference type="SUPFAM" id="SSF50447">
    <property type="entry name" value="Translation proteins"/>
    <property type="match status" value="1"/>
</dbReference>
<dbReference type="PROSITE" id="PS00474">
    <property type="entry name" value="RIBOSOMAL_L3"/>
    <property type="match status" value="1"/>
</dbReference>
<protein>
    <recommendedName>
        <fullName evidence="1">Large ribosomal subunit protein uL3</fullName>
    </recommendedName>
    <alternativeName>
        <fullName evidence="3">50S ribosomal protein L3</fullName>
    </alternativeName>
</protein>
<proteinExistence type="inferred from homology"/>
<keyword id="KW-1185">Reference proteome</keyword>
<keyword id="KW-0687">Ribonucleoprotein</keyword>
<keyword id="KW-0689">Ribosomal protein</keyword>
<keyword id="KW-0694">RNA-binding</keyword>
<keyword id="KW-0699">rRNA-binding</keyword>
<organism>
    <name type="scientific">Sulfurisphaera tokodaii (strain DSM 16993 / JCM 10545 / NBRC 100140 / 7)</name>
    <name type="common">Sulfolobus tokodaii</name>
    <dbReference type="NCBI Taxonomy" id="273063"/>
    <lineage>
        <taxon>Archaea</taxon>
        <taxon>Thermoproteota</taxon>
        <taxon>Thermoprotei</taxon>
        <taxon>Sulfolobales</taxon>
        <taxon>Sulfolobaceae</taxon>
        <taxon>Sulfurisphaera</taxon>
    </lineage>
</organism>
<accession>Q975I1</accession>